<accession>B2FL93</accession>
<sequence length="89" mass="10265">MPRTVFCQYEQRDAEGLDFVPYPGELGQRIFNNIGKQAWAAWLAHQTMLINENRLSPRTPEHRAFLEGELVKFLFEKDAQKPAGFTPEA</sequence>
<evidence type="ECO:0000255" key="1">
    <source>
        <dbReference type="HAMAP-Rule" id="MF_00686"/>
    </source>
</evidence>
<reference key="1">
    <citation type="journal article" date="2008" name="Genome Biol.">
        <title>The complete genome, comparative and functional analysis of Stenotrophomonas maltophilia reveals an organism heavily shielded by drug resistance determinants.</title>
        <authorList>
            <person name="Crossman L.C."/>
            <person name="Gould V.C."/>
            <person name="Dow J.M."/>
            <person name="Vernikos G.S."/>
            <person name="Okazaki A."/>
            <person name="Sebaihia M."/>
            <person name="Saunders D."/>
            <person name="Arrowsmith C."/>
            <person name="Carver T."/>
            <person name="Peters N."/>
            <person name="Adlem E."/>
            <person name="Kerhornou A."/>
            <person name="Lord A."/>
            <person name="Murphy L."/>
            <person name="Seeger K."/>
            <person name="Squares R."/>
            <person name="Rutter S."/>
            <person name="Quail M.A."/>
            <person name="Rajandream M.A."/>
            <person name="Harris D."/>
            <person name="Churcher C."/>
            <person name="Bentley S.D."/>
            <person name="Parkhill J."/>
            <person name="Thomson N.R."/>
            <person name="Avison M.B."/>
        </authorList>
    </citation>
    <scope>NUCLEOTIDE SEQUENCE [LARGE SCALE GENOMIC DNA]</scope>
    <source>
        <strain>K279a</strain>
    </source>
</reference>
<comment type="function">
    <text evidence="1">Could be a mediator in iron transactions between iron acquisition and iron-requiring processes, such as synthesis and/or repair of Fe-S clusters in biosynthetic enzymes.</text>
</comment>
<comment type="similarity">
    <text evidence="1">Belongs to the Fe(2+)-trafficking protein family.</text>
</comment>
<protein>
    <recommendedName>
        <fullName evidence="1">Probable Fe(2+)-trafficking protein</fullName>
    </recommendedName>
</protein>
<name>FETP_STRMK</name>
<gene>
    <name type="ordered locus">Smlt1805</name>
</gene>
<feature type="chain" id="PRO_1000131869" description="Probable Fe(2+)-trafficking protein">
    <location>
        <begin position="1"/>
        <end position="89"/>
    </location>
</feature>
<keyword id="KW-0408">Iron</keyword>
<keyword id="KW-1185">Reference proteome</keyword>
<dbReference type="EMBL" id="AM743169">
    <property type="protein sequence ID" value="CAQ45326.1"/>
    <property type="molecule type" value="Genomic_DNA"/>
</dbReference>
<dbReference type="RefSeq" id="WP_005409085.1">
    <property type="nucleotide sequence ID" value="NC_010943.1"/>
</dbReference>
<dbReference type="SMR" id="B2FL93"/>
<dbReference type="EnsemblBacteria" id="CAQ45326">
    <property type="protein sequence ID" value="CAQ45326"/>
    <property type="gene ID" value="Smlt1805"/>
</dbReference>
<dbReference type="KEGG" id="sml:Smlt1805"/>
<dbReference type="eggNOG" id="COG2924">
    <property type="taxonomic scope" value="Bacteria"/>
</dbReference>
<dbReference type="HOGENOM" id="CLU_170994_0_0_6"/>
<dbReference type="Proteomes" id="UP000008840">
    <property type="component" value="Chromosome"/>
</dbReference>
<dbReference type="GO" id="GO:0005829">
    <property type="term" value="C:cytosol"/>
    <property type="evidence" value="ECO:0007669"/>
    <property type="project" value="TreeGrafter"/>
</dbReference>
<dbReference type="GO" id="GO:0005506">
    <property type="term" value="F:iron ion binding"/>
    <property type="evidence" value="ECO:0007669"/>
    <property type="project" value="UniProtKB-UniRule"/>
</dbReference>
<dbReference type="GO" id="GO:0034599">
    <property type="term" value="P:cellular response to oxidative stress"/>
    <property type="evidence" value="ECO:0007669"/>
    <property type="project" value="TreeGrafter"/>
</dbReference>
<dbReference type="FunFam" id="1.10.3880.10:FF:000001">
    <property type="entry name" value="Probable Fe(2+)-trafficking protein"/>
    <property type="match status" value="1"/>
</dbReference>
<dbReference type="Gene3D" id="1.10.3880.10">
    <property type="entry name" value="Fe(II) trafficking protein YggX"/>
    <property type="match status" value="1"/>
</dbReference>
<dbReference type="HAMAP" id="MF_00686">
    <property type="entry name" value="Fe_traffic_YggX"/>
    <property type="match status" value="1"/>
</dbReference>
<dbReference type="InterPro" id="IPR007457">
    <property type="entry name" value="Fe_traffick_prot_YggX"/>
</dbReference>
<dbReference type="InterPro" id="IPR036766">
    <property type="entry name" value="Fe_traffick_prot_YggX_sf"/>
</dbReference>
<dbReference type="NCBIfam" id="NF003817">
    <property type="entry name" value="PRK05408.1"/>
    <property type="match status" value="1"/>
</dbReference>
<dbReference type="PANTHER" id="PTHR36965">
    <property type="entry name" value="FE(2+)-TRAFFICKING PROTEIN-RELATED"/>
    <property type="match status" value="1"/>
</dbReference>
<dbReference type="PANTHER" id="PTHR36965:SF1">
    <property type="entry name" value="FE(2+)-TRAFFICKING PROTEIN-RELATED"/>
    <property type="match status" value="1"/>
</dbReference>
<dbReference type="Pfam" id="PF04362">
    <property type="entry name" value="Iron_traffic"/>
    <property type="match status" value="1"/>
</dbReference>
<dbReference type="PIRSF" id="PIRSF029827">
    <property type="entry name" value="Fe_traffic_YggX"/>
    <property type="match status" value="1"/>
</dbReference>
<dbReference type="SUPFAM" id="SSF111148">
    <property type="entry name" value="YggX-like"/>
    <property type="match status" value="1"/>
</dbReference>
<proteinExistence type="inferred from homology"/>
<organism>
    <name type="scientific">Stenotrophomonas maltophilia (strain K279a)</name>
    <dbReference type="NCBI Taxonomy" id="522373"/>
    <lineage>
        <taxon>Bacteria</taxon>
        <taxon>Pseudomonadati</taxon>
        <taxon>Pseudomonadota</taxon>
        <taxon>Gammaproteobacteria</taxon>
        <taxon>Lysobacterales</taxon>
        <taxon>Lysobacteraceae</taxon>
        <taxon>Stenotrophomonas</taxon>
        <taxon>Stenotrophomonas maltophilia group</taxon>
    </lineage>
</organism>